<organismHost>
    <name type="scientific">Aves</name>
    <dbReference type="NCBI Taxonomy" id="8782"/>
</organismHost>
<organismHost>
    <name type="scientific">Cetacea</name>
    <name type="common">whales</name>
    <dbReference type="NCBI Taxonomy" id="9721"/>
</organismHost>
<organismHost>
    <name type="scientific">Homo sapiens</name>
    <name type="common">Human</name>
    <dbReference type="NCBI Taxonomy" id="9606"/>
</organismHost>
<organismHost>
    <name type="scientific">Phocidae</name>
    <name type="common">true seals</name>
    <dbReference type="NCBI Taxonomy" id="9709"/>
</organismHost>
<organismHost>
    <name type="scientific">Sus scrofa</name>
    <name type="common">Pig</name>
    <dbReference type="NCBI Taxonomy" id="9823"/>
</organismHost>
<accession>P0DJU7</accession>
<name>PAX_I77A4</name>
<protein>
    <recommendedName>
        <fullName>Protein PA-X</fullName>
    </recommendedName>
</protein>
<evidence type="ECO:0000250" key="1">
    <source>
        <dbReference type="UniProtKB" id="P0CK64"/>
    </source>
</evidence>
<evidence type="ECO:0000250" key="2">
    <source>
        <dbReference type="UniProtKB" id="P0CK68"/>
    </source>
</evidence>
<evidence type="ECO:0000250" key="3">
    <source>
        <dbReference type="UniProtKB" id="P0DJW8"/>
    </source>
</evidence>
<evidence type="ECO:0000250" key="4">
    <source>
        <dbReference type="UniProtKB" id="P0DXO5"/>
    </source>
</evidence>
<evidence type="ECO:0000250" key="5">
    <source>
        <dbReference type="UniProtKB" id="P0DXO6"/>
    </source>
</evidence>
<evidence type="ECO:0000305" key="6"/>
<feature type="chain" id="PRO_0000419410" description="Protein PA-X">
    <location>
        <begin position="1"/>
        <end position="252"/>
    </location>
</feature>
<feature type="active site" evidence="2">
    <location>
        <position position="80"/>
    </location>
</feature>
<feature type="active site" evidence="2">
    <location>
        <position position="108"/>
    </location>
</feature>
<feature type="site" description="Important for efficient shutoff activity" evidence="5">
    <location>
        <position position="28"/>
    </location>
</feature>
<feature type="site" description="Important for efficient shutoff activity" evidence="5">
    <location>
        <position position="65"/>
    </location>
</feature>
<feature type="site" description="Important for efficient shutoff activity and nuclear localization" evidence="4">
    <location>
        <position position="195"/>
    </location>
</feature>
<feature type="site" description="Important for efficient shutoff activity and nuclear localization" evidence="4">
    <location>
        <position position="198"/>
    </location>
</feature>
<feature type="site" description="Important for efficient shutoff activity and nuclear localization" evidence="4">
    <location>
        <position position="199"/>
    </location>
</feature>
<feature type="site" description="Important for efficient shutoff activity" evidence="3">
    <location>
        <position position="202"/>
    </location>
</feature>
<feature type="site" description="Important for efficient shutoff activity" evidence="3">
    <location>
        <position position="203"/>
    </location>
</feature>
<feature type="site" description="Important for efficient shutoff activity" evidence="3">
    <location>
        <position position="206"/>
    </location>
</feature>
<gene>
    <name type="primary">PA</name>
</gene>
<reference key="1">
    <citation type="journal article" date="2000" name="Virus Res.">
        <title>Genetic characterization of H3N2 influenza viruses isolated from pigs in North America, 1977-1999: evidence for wholly human and reassortant virus genotypes.</title>
        <authorList>
            <person name="Karasin A.I."/>
            <person name="Schutten M.M."/>
            <person name="Cooper L.A."/>
            <person name="Smith C.B."/>
            <person name="Subbarao K."/>
            <person name="Anderson G.A."/>
            <person name="Carman S."/>
            <person name="Olsen C.W."/>
        </authorList>
    </citation>
    <scope>NUCLEOTIDE SEQUENCE [GENOMIC RNA]</scope>
</reference>
<reference key="2">
    <citation type="submission" date="2006-03" db="EMBL/GenBank/DDBJ databases">
        <title>The NIAID influenza genome sequencing project.</title>
        <authorList>
            <person name="Ghedin E."/>
            <person name="Spiro D."/>
            <person name="Miller N."/>
            <person name="Zaborsky J."/>
            <person name="Feldblyum T."/>
            <person name="Subbu V."/>
            <person name="Shumway M."/>
            <person name="Sparenborg J."/>
            <person name="Groveman L."/>
            <person name="Halpin R."/>
            <person name="Sitz J."/>
            <person name="Koo H."/>
            <person name="Salzberg S.L."/>
            <person name="Webster R.G."/>
            <person name="Hoffmann E."/>
            <person name="Krauss S."/>
            <person name="Naeve C."/>
            <person name="Bao Y."/>
            <person name="Bolotov P."/>
            <person name="Dernovoy D."/>
            <person name="Kiryutin B."/>
            <person name="Lipman D.J."/>
            <person name="Tatusova T."/>
        </authorList>
    </citation>
    <scope>NUCLEOTIDE SEQUENCE [GENOMIC RNA]</scope>
</reference>
<comment type="function">
    <text evidence="1 4">Plays a major role in the shutoff of the host protein expression by cleaving mRNAs probably via an endonuclease activity. This host shutoff allows the virus to escape from the host antiviral response (By similarity). Hijacks host RNA splicing machinery to selectively target host RNAs containing introns for destruction. This may explain the preferential degradation of RNAs that have undergone co- or post-transcriptional processing (By similarity).</text>
</comment>
<comment type="subcellular location">
    <subcellularLocation>
        <location evidence="4">Host cytoplasm</location>
    </subcellularLocation>
    <subcellularLocation>
        <location evidence="4">Host nucleus</location>
    </subcellularLocation>
</comment>
<comment type="alternative products">
    <event type="ribosomal frameshifting"/>
    <isoform>
        <id>P0DJU7-1</id>
        <name>PA-X</name>
        <sequence type="displayed"/>
    </isoform>
    <isoform>
        <id>Q9EA39-1</id>
        <name>PA</name>
        <sequence type="external"/>
    </isoform>
</comment>
<comment type="domain">
    <text evidence="1 4">The probable endonuclease active site in the N-terminus and the basic amino acid cluster in the C-terminus are important for the shutoff activity. The C-terminus acts as a nuclear localization signal (By similarity). The C-terminus is recruited to host protein complexes involved in nuclear Pol II RNA processing (By similarity).</text>
</comment>
<comment type="similarity">
    <text evidence="6">Belongs to the influenza viruses PA-X family.</text>
</comment>
<dbReference type="EMBL" id="AF251393">
    <property type="status" value="NOT_ANNOTATED_CDS"/>
    <property type="molecule type" value="Genomic_RNA"/>
</dbReference>
<dbReference type="SMR" id="P0DJU7"/>
<dbReference type="GO" id="GO:0003723">
    <property type="term" value="F:RNA binding"/>
    <property type="evidence" value="ECO:0007669"/>
    <property type="project" value="InterPro"/>
</dbReference>
<dbReference type="GO" id="GO:0039694">
    <property type="term" value="P:viral RNA genome replication"/>
    <property type="evidence" value="ECO:0007669"/>
    <property type="project" value="InterPro"/>
</dbReference>
<dbReference type="GO" id="GO:0075523">
    <property type="term" value="P:viral translational frameshifting"/>
    <property type="evidence" value="ECO:0007669"/>
    <property type="project" value="UniProtKB-KW"/>
</dbReference>
<dbReference type="FunFam" id="3.40.91.90:FF:000001">
    <property type="entry name" value="Polymerase acidic protein"/>
    <property type="match status" value="1"/>
</dbReference>
<dbReference type="Gene3D" id="3.40.91.90">
    <property type="entry name" value="Influenza RNA-dependent RNA polymerase subunit PA, endonuclease domain"/>
    <property type="match status" value="1"/>
</dbReference>
<dbReference type="InterPro" id="IPR001009">
    <property type="entry name" value="PA/PA-X"/>
</dbReference>
<dbReference type="InterPro" id="IPR038372">
    <property type="entry name" value="PA/PA-X_sf"/>
</dbReference>
<dbReference type="Pfam" id="PF00603">
    <property type="entry name" value="Flu_PA"/>
    <property type="match status" value="1"/>
</dbReference>
<proteinExistence type="inferred from homology"/>
<keyword id="KW-1132">Decay of host mRNAs by virus</keyword>
<keyword id="KW-1262">Eukaryotic host gene expression shutoff by virus</keyword>
<keyword id="KW-1035">Host cytoplasm</keyword>
<keyword id="KW-1190">Host gene expression shutoff by virus</keyword>
<keyword id="KW-1192">Host mRNA suppression by virus</keyword>
<keyword id="KW-1048">Host nucleus</keyword>
<keyword id="KW-0945">Host-virus interaction</keyword>
<keyword id="KW-0688">Ribosomal frameshifting</keyword>
<sequence length="252" mass="29468">MEDFVRQCFNPMIVELAEKAMKEYGEDLKIETNKFAAICTHLEVCFMYSDFHFINEQGESIVVELDDPNALLKHRFEIIEGRDRTMAWTVVNSICNTTGAEKPKFLPDLYDYKKNRFIEIGVTRREVHIYYLEKANKIKSENTHIHIFSFTGEEMATKADYTLDEESRARIKTRLFTIRQEMANRGLWDSFVSPKEAKKQLKKDLKSQELCAGLPTKVFRRTSSALRILEPMWMDSNRTVALRASFLKCPKK</sequence>
<organism>
    <name type="scientific">Influenza A virus (strain A/Swine/Colorado/1/1977 H3N2)</name>
    <dbReference type="NCBI Taxonomy" id="385645"/>
    <lineage>
        <taxon>Viruses</taxon>
        <taxon>Riboviria</taxon>
        <taxon>Orthornavirae</taxon>
        <taxon>Negarnaviricota</taxon>
        <taxon>Polyploviricotina</taxon>
        <taxon>Insthoviricetes</taxon>
        <taxon>Articulavirales</taxon>
        <taxon>Orthomyxoviridae</taxon>
        <taxon>Alphainfluenzavirus</taxon>
        <taxon>Alphainfluenzavirus influenzae</taxon>
        <taxon>Influenza A virus</taxon>
    </lineage>
</organism>